<comment type="function">
    <text evidence="1">Catalyzes the addition and repair of the essential 3'-terminal CCA sequence in tRNAs without using a nucleic acid template. Adds these three nucleotides in the order of C, C, and A to the tRNA nucleotide-73, using CTP and ATP as substrates and producing inorganic pyrophosphate. tRNA 3'-terminal CCA addition is required both for tRNA processing and repair. Also involved in tRNA surveillance by mediating tandem CCA addition to generate a CCACCA at the 3' terminus of unstable tRNAs. While stable tRNAs receive only 3'-terminal CCA, unstable tRNAs are marked with CCACCA and rapidly degraded.</text>
</comment>
<comment type="catalytic activity">
    <reaction evidence="1">
        <text>a tRNA precursor + 2 CTP + ATP = a tRNA with a 3' CCA end + 3 diphosphate</text>
        <dbReference type="Rhea" id="RHEA:14433"/>
        <dbReference type="Rhea" id="RHEA-COMP:10465"/>
        <dbReference type="Rhea" id="RHEA-COMP:10468"/>
        <dbReference type="ChEBI" id="CHEBI:30616"/>
        <dbReference type="ChEBI" id="CHEBI:33019"/>
        <dbReference type="ChEBI" id="CHEBI:37563"/>
        <dbReference type="ChEBI" id="CHEBI:74896"/>
        <dbReference type="ChEBI" id="CHEBI:83071"/>
        <dbReference type="EC" id="2.7.7.72"/>
    </reaction>
</comment>
<comment type="catalytic activity">
    <reaction evidence="1">
        <text>a tRNA with a 3' CCA end + 2 CTP + ATP = a tRNA with a 3' CCACCA end + 3 diphosphate</text>
        <dbReference type="Rhea" id="RHEA:76235"/>
        <dbReference type="Rhea" id="RHEA-COMP:10468"/>
        <dbReference type="Rhea" id="RHEA-COMP:18655"/>
        <dbReference type="ChEBI" id="CHEBI:30616"/>
        <dbReference type="ChEBI" id="CHEBI:33019"/>
        <dbReference type="ChEBI" id="CHEBI:37563"/>
        <dbReference type="ChEBI" id="CHEBI:83071"/>
        <dbReference type="ChEBI" id="CHEBI:195187"/>
    </reaction>
    <physiologicalReaction direction="left-to-right" evidence="1">
        <dbReference type="Rhea" id="RHEA:76236"/>
    </physiologicalReaction>
</comment>
<comment type="cofactor">
    <cofactor evidence="1">
        <name>Mg(2+)</name>
        <dbReference type="ChEBI" id="CHEBI:18420"/>
    </cofactor>
    <text evidence="1">Magnesium is required for nucleotidyltransferase activity.</text>
</comment>
<comment type="cofactor">
    <cofactor evidence="1">
        <name>Ni(2+)</name>
        <dbReference type="ChEBI" id="CHEBI:49786"/>
    </cofactor>
    <text evidence="1">Nickel for phosphatase activity.</text>
</comment>
<comment type="subunit">
    <text evidence="1">Monomer. Can also form homodimers and oligomers.</text>
</comment>
<comment type="domain">
    <text evidence="1">Comprises two domains: an N-terminal domain containing the nucleotidyltransferase activity and a C-terminal HD domain associated with both phosphodiesterase and phosphatase activities.</text>
</comment>
<comment type="miscellaneous">
    <text evidence="1">A single active site specifically recognizes both ATP and CTP and is responsible for their addition.</text>
</comment>
<comment type="similarity">
    <text evidence="1">Belongs to the tRNA nucleotidyltransferase/poly(A) polymerase family. Bacterial CCA-adding enzyme type 1 subfamily.</text>
</comment>
<comment type="sequence caution" evidence="2">
    <conflict type="erroneous initiation">
        <sequence resource="EMBL-CDS" id="AAO09136"/>
    </conflict>
</comment>
<accession>Q8CWL6</accession>
<reference key="1">
    <citation type="submission" date="2002-12" db="EMBL/GenBank/DDBJ databases">
        <title>Complete genome sequence of Vibrio vulnificus CMCP6.</title>
        <authorList>
            <person name="Rhee J.H."/>
            <person name="Kim S.Y."/>
            <person name="Chung S.S."/>
            <person name="Kim J.J."/>
            <person name="Moon Y.H."/>
            <person name="Jeong H."/>
            <person name="Choy H.E."/>
        </authorList>
    </citation>
    <scope>NUCLEOTIDE SEQUENCE [LARGE SCALE GENOMIC DNA]</scope>
    <source>
        <strain>CMCP6</strain>
    </source>
</reference>
<protein>
    <recommendedName>
        <fullName evidence="1">Multifunctional CCA protein</fullName>
    </recommendedName>
    <domain>
        <recommendedName>
            <fullName evidence="1">CCA-adding enzyme</fullName>
            <ecNumber evidence="1">2.7.7.72</ecNumber>
        </recommendedName>
        <alternativeName>
            <fullName evidence="1">CCA tRNA nucleotidyltransferase</fullName>
        </alternativeName>
        <alternativeName>
            <fullName evidence="1">tRNA CCA-pyrophosphorylase</fullName>
        </alternativeName>
        <alternativeName>
            <fullName evidence="1">tRNA adenylyl-/cytidylyl-transferase</fullName>
        </alternativeName>
        <alternativeName>
            <fullName evidence="1">tRNA nucleotidyltransferase</fullName>
        </alternativeName>
        <alternativeName>
            <fullName evidence="1">tRNA-NT</fullName>
        </alternativeName>
    </domain>
    <domain>
        <recommendedName>
            <fullName evidence="1">2'-nucleotidase</fullName>
            <ecNumber evidence="1">3.1.3.-</ecNumber>
        </recommendedName>
    </domain>
    <domain>
        <recommendedName>
            <fullName evidence="1">2',3'-cyclic phosphodiesterase</fullName>
            <ecNumber evidence="1">3.1.4.-</ecNumber>
        </recommendedName>
    </domain>
    <domain>
        <recommendedName>
            <fullName evidence="1">Phosphatase</fullName>
            <ecNumber evidence="1">3.1.3.-</ecNumber>
        </recommendedName>
    </domain>
</protein>
<sequence length="407" mass="45546">MEVYLVGGAVRDKLLGIPVYDQDWVVVGATAEQMLNAGYSPVGKDFPVFLHPKTKQEYALARTERKTGQGYKGFECFFSPDVALEEDLLRRDLTINAIAMDSQGVLYDPYGGQQDLQNRILRHVSEAFVEDPLRVLRVARFAAKLAPLGFRVADETMQLMQSIVASGELSALTAERVWQEWHKSLLTPAPQQFLAVLRQCGALAVVLPEIDALFGVPQPEKWHPEIDTGIHTLLVAEQAAKLSSSAVVRFAAQVHDLGKGVTPPSEWPSHKMHCHTGLKLIKQLCERVRVPNEFRDLALMVCEQHSNIHRAAELKPQTMVKIFNKLDVWRKAERLNDILLCCQADHAGRQGLQDHPYPQAERIQLAYQAALSVEVQSIIQDGFKGPAIRDEQERRRTEAVKAALLNA</sequence>
<evidence type="ECO:0000255" key="1">
    <source>
        <dbReference type="HAMAP-Rule" id="MF_01261"/>
    </source>
</evidence>
<evidence type="ECO:0000305" key="2"/>
<gene>
    <name evidence="1" type="primary">cca</name>
    <name type="ordered locus">VV1_0622</name>
</gene>
<dbReference type="EC" id="2.7.7.72" evidence="1"/>
<dbReference type="EC" id="3.1.3.-" evidence="1"/>
<dbReference type="EC" id="3.1.4.-" evidence="1"/>
<dbReference type="EMBL" id="AE016795">
    <property type="protein sequence ID" value="AAO09136.1"/>
    <property type="status" value="ALT_INIT"/>
    <property type="molecule type" value="Genomic_DNA"/>
</dbReference>
<dbReference type="RefSeq" id="WP_043921075.1">
    <property type="nucleotide sequence ID" value="NC_004459.3"/>
</dbReference>
<dbReference type="SMR" id="Q8CWL6"/>
<dbReference type="KEGG" id="vvu:VV1_0622"/>
<dbReference type="HOGENOM" id="CLU_015961_1_1_6"/>
<dbReference type="Proteomes" id="UP000002275">
    <property type="component" value="Chromosome 1"/>
</dbReference>
<dbReference type="GO" id="GO:0005524">
    <property type="term" value="F:ATP binding"/>
    <property type="evidence" value="ECO:0007669"/>
    <property type="project" value="UniProtKB-UniRule"/>
</dbReference>
<dbReference type="GO" id="GO:0004810">
    <property type="term" value="F:CCA tRNA nucleotidyltransferase activity"/>
    <property type="evidence" value="ECO:0007669"/>
    <property type="project" value="UniProtKB-UniRule"/>
</dbReference>
<dbReference type="GO" id="GO:0004112">
    <property type="term" value="F:cyclic-nucleotide phosphodiesterase activity"/>
    <property type="evidence" value="ECO:0007669"/>
    <property type="project" value="UniProtKB-UniRule"/>
</dbReference>
<dbReference type="GO" id="GO:0000287">
    <property type="term" value="F:magnesium ion binding"/>
    <property type="evidence" value="ECO:0007669"/>
    <property type="project" value="UniProtKB-UniRule"/>
</dbReference>
<dbReference type="GO" id="GO:0016791">
    <property type="term" value="F:phosphatase activity"/>
    <property type="evidence" value="ECO:0007669"/>
    <property type="project" value="UniProtKB-UniRule"/>
</dbReference>
<dbReference type="GO" id="GO:0000049">
    <property type="term" value="F:tRNA binding"/>
    <property type="evidence" value="ECO:0007669"/>
    <property type="project" value="UniProtKB-UniRule"/>
</dbReference>
<dbReference type="GO" id="GO:0042245">
    <property type="term" value="P:RNA repair"/>
    <property type="evidence" value="ECO:0007669"/>
    <property type="project" value="UniProtKB-KW"/>
</dbReference>
<dbReference type="GO" id="GO:0001680">
    <property type="term" value="P:tRNA 3'-terminal CCA addition"/>
    <property type="evidence" value="ECO:0007669"/>
    <property type="project" value="UniProtKB-UniRule"/>
</dbReference>
<dbReference type="CDD" id="cd00077">
    <property type="entry name" value="HDc"/>
    <property type="match status" value="1"/>
</dbReference>
<dbReference type="CDD" id="cd05398">
    <property type="entry name" value="NT_ClassII-CCAase"/>
    <property type="match status" value="1"/>
</dbReference>
<dbReference type="FunFam" id="1.10.3090.10:FF:000001">
    <property type="entry name" value="Multifunctional CCA protein"/>
    <property type="match status" value="1"/>
</dbReference>
<dbReference type="Gene3D" id="3.30.460.10">
    <property type="entry name" value="Beta Polymerase, domain 2"/>
    <property type="match status" value="1"/>
</dbReference>
<dbReference type="Gene3D" id="1.10.3090.10">
    <property type="entry name" value="cca-adding enzyme, domain 2"/>
    <property type="match status" value="1"/>
</dbReference>
<dbReference type="HAMAP" id="MF_01261">
    <property type="entry name" value="CCA_bact_type1"/>
    <property type="match status" value="1"/>
</dbReference>
<dbReference type="HAMAP" id="MF_01262">
    <property type="entry name" value="CCA_bact_type2"/>
    <property type="match status" value="1"/>
</dbReference>
<dbReference type="InterPro" id="IPR012006">
    <property type="entry name" value="CCA_bact"/>
</dbReference>
<dbReference type="InterPro" id="IPR003607">
    <property type="entry name" value="HD/PDEase_dom"/>
</dbReference>
<dbReference type="InterPro" id="IPR006674">
    <property type="entry name" value="HD_domain"/>
</dbReference>
<dbReference type="InterPro" id="IPR043519">
    <property type="entry name" value="NT_sf"/>
</dbReference>
<dbReference type="InterPro" id="IPR002646">
    <property type="entry name" value="PolA_pol_head_dom"/>
</dbReference>
<dbReference type="InterPro" id="IPR032828">
    <property type="entry name" value="PolyA_RNA-bd"/>
</dbReference>
<dbReference type="InterPro" id="IPR050124">
    <property type="entry name" value="tRNA_CCA-adding_enzyme"/>
</dbReference>
<dbReference type="NCBIfam" id="NF008137">
    <property type="entry name" value="PRK10885.1"/>
    <property type="match status" value="1"/>
</dbReference>
<dbReference type="PANTHER" id="PTHR47545">
    <property type="entry name" value="MULTIFUNCTIONAL CCA PROTEIN"/>
    <property type="match status" value="1"/>
</dbReference>
<dbReference type="PANTHER" id="PTHR47545:SF1">
    <property type="entry name" value="MULTIFUNCTIONAL CCA PROTEIN"/>
    <property type="match status" value="1"/>
</dbReference>
<dbReference type="Pfam" id="PF01966">
    <property type="entry name" value="HD"/>
    <property type="match status" value="1"/>
</dbReference>
<dbReference type="Pfam" id="PF01743">
    <property type="entry name" value="PolyA_pol"/>
    <property type="match status" value="1"/>
</dbReference>
<dbReference type="Pfam" id="PF12627">
    <property type="entry name" value="PolyA_pol_RNAbd"/>
    <property type="match status" value="1"/>
</dbReference>
<dbReference type="PIRSF" id="PIRSF000813">
    <property type="entry name" value="CCA_bact"/>
    <property type="match status" value="1"/>
</dbReference>
<dbReference type="SUPFAM" id="SSF81301">
    <property type="entry name" value="Nucleotidyltransferase"/>
    <property type="match status" value="1"/>
</dbReference>
<dbReference type="SUPFAM" id="SSF81891">
    <property type="entry name" value="Poly A polymerase C-terminal region-like"/>
    <property type="match status" value="1"/>
</dbReference>
<dbReference type="PROSITE" id="PS51831">
    <property type="entry name" value="HD"/>
    <property type="match status" value="1"/>
</dbReference>
<organism>
    <name type="scientific">Vibrio vulnificus (strain CMCP6)</name>
    <dbReference type="NCBI Taxonomy" id="216895"/>
    <lineage>
        <taxon>Bacteria</taxon>
        <taxon>Pseudomonadati</taxon>
        <taxon>Pseudomonadota</taxon>
        <taxon>Gammaproteobacteria</taxon>
        <taxon>Vibrionales</taxon>
        <taxon>Vibrionaceae</taxon>
        <taxon>Vibrio</taxon>
    </lineage>
</organism>
<keyword id="KW-0067">ATP-binding</keyword>
<keyword id="KW-0378">Hydrolase</keyword>
<keyword id="KW-0460">Magnesium</keyword>
<keyword id="KW-0479">Metal-binding</keyword>
<keyword id="KW-0511">Multifunctional enzyme</keyword>
<keyword id="KW-0533">Nickel</keyword>
<keyword id="KW-0547">Nucleotide-binding</keyword>
<keyword id="KW-0548">Nucleotidyltransferase</keyword>
<keyword id="KW-0692">RNA repair</keyword>
<keyword id="KW-0694">RNA-binding</keyword>
<keyword id="KW-0808">Transferase</keyword>
<keyword id="KW-0819">tRNA processing</keyword>
<feature type="chain" id="PRO_0000139005" description="Multifunctional CCA protein">
    <location>
        <begin position="1"/>
        <end position="407"/>
    </location>
</feature>
<feature type="domain" description="HD" evidence="1">
    <location>
        <begin position="228"/>
        <end position="329"/>
    </location>
</feature>
<feature type="binding site" evidence="1">
    <location>
        <position position="8"/>
    </location>
    <ligand>
        <name>ATP</name>
        <dbReference type="ChEBI" id="CHEBI:30616"/>
    </ligand>
</feature>
<feature type="binding site" evidence="1">
    <location>
        <position position="8"/>
    </location>
    <ligand>
        <name>CTP</name>
        <dbReference type="ChEBI" id="CHEBI:37563"/>
    </ligand>
</feature>
<feature type="binding site" evidence="1">
    <location>
        <position position="11"/>
    </location>
    <ligand>
        <name>ATP</name>
        <dbReference type="ChEBI" id="CHEBI:30616"/>
    </ligand>
</feature>
<feature type="binding site" evidence="1">
    <location>
        <position position="11"/>
    </location>
    <ligand>
        <name>CTP</name>
        <dbReference type="ChEBI" id="CHEBI:37563"/>
    </ligand>
</feature>
<feature type="binding site" evidence="1">
    <location>
        <position position="21"/>
    </location>
    <ligand>
        <name>Mg(2+)</name>
        <dbReference type="ChEBI" id="CHEBI:18420"/>
    </ligand>
</feature>
<feature type="binding site" evidence="1">
    <location>
        <position position="23"/>
    </location>
    <ligand>
        <name>Mg(2+)</name>
        <dbReference type="ChEBI" id="CHEBI:18420"/>
    </ligand>
</feature>
<feature type="binding site" evidence="1">
    <location>
        <position position="91"/>
    </location>
    <ligand>
        <name>ATP</name>
        <dbReference type="ChEBI" id="CHEBI:30616"/>
    </ligand>
</feature>
<feature type="binding site" evidence="1">
    <location>
        <position position="91"/>
    </location>
    <ligand>
        <name>CTP</name>
        <dbReference type="ChEBI" id="CHEBI:37563"/>
    </ligand>
</feature>
<feature type="binding site" evidence="1">
    <location>
        <position position="137"/>
    </location>
    <ligand>
        <name>ATP</name>
        <dbReference type="ChEBI" id="CHEBI:30616"/>
    </ligand>
</feature>
<feature type="binding site" evidence="1">
    <location>
        <position position="137"/>
    </location>
    <ligand>
        <name>CTP</name>
        <dbReference type="ChEBI" id="CHEBI:37563"/>
    </ligand>
</feature>
<feature type="binding site" evidence="1">
    <location>
        <position position="140"/>
    </location>
    <ligand>
        <name>ATP</name>
        <dbReference type="ChEBI" id="CHEBI:30616"/>
    </ligand>
</feature>
<feature type="binding site" evidence="1">
    <location>
        <position position="140"/>
    </location>
    <ligand>
        <name>CTP</name>
        <dbReference type="ChEBI" id="CHEBI:37563"/>
    </ligand>
</feature>
<name>CCA_VIBVU</name>
<proteinExistence type="inferred from homology"/>